<comment type="function">
    <text>Probably involved in the binding-dependent system.</text>
</comment>
<comment type="subcellular location">
    <subcellularLocation>
        <location evidence="3">Periplasm</location>
    </subcellularLocation>
</comment>
<comment type="similarity">
    <text evidence="3">Belongs to the bacterial solute-binding protein ModA family.</text>
</comment>
<proteinExistence type="evidence at protein level"/>
<dbReference type="EMBL" id="L42023">
    <property type="protein sequence ID" value="AAC23171.1"/>
    <property type="molecule type" value="Genomic_DNA"/>
</dbReference>
<dbReference type="PIR" id="B64127">
    <property type="entry name" value="B64127"/>
</dbReference>
<dbReference type="RefSeq" id="NP_439674.1">
    <property type="nucleotide sequence ID" value="NC_000907.1"/>
</dbReference>
<dbReference type="SMR" id="P71391"/>
<dbReference type="STRING" id="71421.HI_1525"/>
<dbReference type="EnsemblBacteria" id="AAC23171">
    <property type="protein sequence ID" value="AAC23171"/>
    <property type="gene ID" value="HI_1525"/>
</dbReference>
<dbReference type="KEGG" id="hin:HI_1525"/>
<dbReference type="PATRIC" id="fig|71421.8.peg.1596"/>
<dbReference type="eggNOG" id="COG0725">
    <property type="taxonomic scope" value="Bacteria"/>
</dbReference>
<dbReference type="HOGENOM" id="CLU_065520_2_0_6"/>
<dbReference type="OrthoDB" id="9785015at2"/>
<dbReference type="PhylomeDB" id="P71391"/>
<dbReference type="BioCyc" id="HINF71421:G1GJ1-1547-MONOMER"/>
<dbReference type="Proteomes" id="UP000000579">
    <property type="component" value="Chromosome"/>
</dbReference>
<dbReference type="GO" id="GO:0030288">
    <property type="term" value="C:outer membrane-bounded periplasmic space"/>
    <property type="evidence" value="ECO:0000318"/>
    <property type="project" value="GO_Central"/>
</dbReference>
<dbReference type="GO" id="GO:0046872">
    <property type="term" value="F:metal ion binding"/>
    <property type="evidence" value="ECO:0007669"/>
    <property type="project" value="UniProtKB-KW"/>
</dbReference>
<dbReference type="GO" id="GO:0030973">
    <property type="term" value="F:molybdate ion binding"/>
    <property type="evidence" value="ECO:0000250"/>
    <property type="project" value="UniProtKB"/>
</dbReference>
<dbReference type="GO" id="GO:0015689">
    <property type="term" value="P:molybdate ion transport"/>
    <property type="evidence" value="ECO:0000318"/>
    <property type="project" value="GO_Central"/>
</dbReference>
<dbReference type="CDD" id="cd13517">
    <property type="entry name" value="PBP2_ModA3_like"/>
    <property type="match status" value="1"/>
</dbReference>
<dbReference type="Gene3D" id="3.40.190.10">
    <property type="entry name" value="Periplasmic binding protein-like II"/>
    <property type="match status" value="2"/>
</dbReference>
<dbReference type="InterPro" id="IPR005950">
    <property type="entry name" value="ModA"/>
</dbReference>
<dbReference type="InterPro" id="IPR050682">
    <property type="entry name" value="ModA/WtpA"/>
</dbReference>
<dbReference type="NCBIfam" id="TIGR01256">
    <property type="entry name" value="modA"/>
    <property type="match status" value="1"/>
</dbReference>
<dbReference type="PANTHER" id="PTHR30632">
    <property type="entry name" value="MOLYBDATE-BINDING PERIPLASMIC PROTEIN"/>
    <property type="match status" value="1"/>
</dbReference>
<dbReference type="PANTHER" id="PTHR30632:SF17">
    <property type="entry name" value="MOLYBDATE-BINDING PROTEIN MODA"/>
    <property type="match status" value="1"/>
</dbReference>
<dbReference type="Pfam" id="PF13531">
    <property type="entry name" value="SBP_bac_11"/>
    <property type="match status" value="1"/>
</dbReference>
<dbReference type="PIRSF" id="PIRSF004846">
    <property type="entry name" value="ModA"/>
    <property type="match status" value="1"/>
</dbReference>
<dbReference type="SUPFAM" id="SSF53850">
    <property type="entry name" value="Periplasmic binding protein-like II"/>
    <property type="match status" value="1"/>
</dbReference>
<name>Y1525_HAEIN</name>
<sequence>MKKLVAVTSMILTTFSVQAADLYLYAGAGLKEPVEKIIHQYEQETGNKVTVEYGGSGQILARYNTVKSGDLFLAGSEDYVTKLQKTNDVNNIGTIVLHVPVMAIRKDKISGIDSFKALAESSLRLGIGDSKAMALGKGAEKMFELSGYQKQLNDKIVVKAATVKQLMLYLLNGDVDAAVVGRSGAWKVRDKVELLPSPKGTPEEKVTIGLLFSSKYPKEAQQLFDFFKSPQGVKYFTDEGFLPAK</sequence>
<organism>
    <name type="scientific">Haemophilus influenzae (strain ATCC 51907 / DSM 11121 / KW20 / Rd)</name>
    <dbReference type="NCBI Taxonomy" id="71421"/>
    <lineage>
        <taxon>Bacteria</taxon>
        <taxon>Pseudomonadati</taxon>
        <taxon>Pseudomonadota</taxon>
        <taxon>Gammaproteobacteria</taxon>
        <taxon>Pasteurellales</taxon>
        <taxon>Pasteurellaceae</taxon>
        <taxon>Haemophilus</taxon>
    </lineage>
</organism>
<protein>
    <recommendedName>
        <fullName>Putative binding protein HI_1525</fullName>
    </recommendedName>
</protein>
<reference key="1">
    <citation type="journal article" date="1995" name="Science">
        <title>Whole-genome random sequencing and assembly of Haemophilus influenzae Rd.</title>
        <authorList>
            <person name="Fleischmann R.D."/>
            <person name="Adams M.D."/>
            <person name="White O."/>
            <person name="Clayton R.A."/>
            <person name="Kirkness E.F."/>
            <person name="Kerlavage A.R."/>
            <person name="Bult C.J."/>
            <person name="Tomb J.-F."/>
            <person name="Dougherty B.A."/>
            <person name="Merrick J.M."/>
            <person name="McKenney K."/>
            <person name="Sutton G.G."/>
            <person name="FitzHugh W."/>
            <person name="Fields C.A."/>
            <person name="Gocayne J.D."/>
            <person name="Scott J.D."/>
            <person name="Shirley R."/>
            <person name="Liu L.-I."/>
            <person name="Glodek A."/>
            <person name="Kelley J.M."/>
            <person name="Weidman J.F."/>
            <person name="Phillips C.A."/>
            <person name="Spriggs T."/>
            <person name="Hedblom E."/>
            <person name="Cotton M.D."/>
            <person name="Utterback T.R."/>
            <person name="Hanna M.C."/>
            <person name="Nguyen D.T."/>
            <person name="Saudek D.M."/>
            <person name="Brandon R.C."/>
            <person name="Fine L.D."/>
            <person name="Fritchman J.L."/>
            <person name="Fuhrmann J.L."/>
            <person name="Geoghagen N.S.M."/>
            <person name="Gnehm C.L."/>
            <person name="McDonald L.A."/>
            <person name="Small K.V."/>
            <person name="Fraser C.M."/>
            <person name="Smith H.O."/>
            <person name="Venter J.C."/>
        </authorList>
    </citation>
    <scope>NUCLEOTIDE SEQUENCE [LARGE SCALE GENOMIC DNA]</scope>
    <source>
        <strain>ATCC 51907 / DSM 11121 / KW20 / Rd</strain>
    </source>
</reference>
<reference key="2">
    <citation type="journal article" date="2000" name="Electrophoresis">
        <title>Two-dimensional map of the proteome of Haemophilus influenzae.</title>
        <authorList>
            <person name="Langen H."/>
            <person name="Takacs B."/>
            <person name="Evers S."/>
            <person name="Berndt P."/>
            <person name="Lahm H.W."/>
            <person name="Wipf B."/>
            <person name="Gray C."/>
            <person name="Fountoulakis M."/>
        </authorList>
    </citation>
    <scope>IDENTIFICATION BY MASS SPECTROMETRY</scope>
    <source>
        <strain>ATCC 51907 / DSM 11121 / KW20 / Rd</strain>
    </source>
</reference>
<gene>
    <name type="ordered locus">HI_1525</name>
</gene>
<accession>P71391</accession>
<feature type="signal peptide" evidence="2">
    <location>
        <begin position="1"/>
        <end position="19"/>
    </location>
</feature>
<feature type="chain" id="PRO_0000031832" description="Putative binding protein HI_1525">
    <location>
        <begin position="20"/>
        <end position="245"/>
    </location>
</feature>
<feature type="binding site" evidence="1">
    <location>
        <position position="56"/>
    </location>
    <ligand>
        <name>molybdate</name>
        <dbReference type="ChEBI" id="CHEBI:36264"/>
    </ligand>
</feature>
<feature type="binding site" evidence="1">
    <location>
        <position position="163"/>
    </location>
    <ligand>
        <name>molybdate</name>
        <dbReference type="ChEBI" id="CHEBI:36264"/>
    </ligand>
</feature>
<evidence type="ECO:0000250" key="1">
    <source>
        <dbReference type="UniProtKB" id="P37329"/>
    </source>
</evidence>
<evidence type="ECO:0000255" key="2"/>
<evidence type="ECO:0000305" key="3"/>
<keyword id="KW-0479">Metal-binding</keyword>
<keyword id="KW-0574">Periplasm</keyword>
<keyword id="KW-1185">Reference proteome</keyword>
<keyword id="KW-0732">Signal</keyword>
<keyword id="KW-0813">Transport</keyword>